<organism>
    <name type="scientific">Mesomycoplasma hyopneumoniae (strain 232)</name>
    <name type="common">Mycoplasma hyopneumoniae</name>
    <dbReference type="NCBI Taxonomy" id="295358"/>
    <lineage>
        <taxon>Bacteria</taxon>
        <taxon>Bacillati</taxon>
        <taxon>Mycoplasmatota</taxon>
        <taxon>Mycoplasmoidales</taxon>
        <taxon>Metamycoplasmataceae</taxon>
        <taxon>Mesomycoplasma</taxon>
    </lineage>
</organism>
<protein>
    <recommendedName>
        <fullName evidence="1">Large ribosomal subunit protein uL3</fullName>
    </recommendedName>
    <alternativeName>
        <fullName evidence="3">50S ribosomal protein L3</fullName>
    </alternativeName>
</protein>
<comment type="function">
    <text evidence="1">One of the primary rRNA binding proteins, it binds directly near the 3'-end of the 23S rRNA, where it nucleates assembly of the 50S subunit.</text>
</comment>
<comment type="subunit">
    <text evidence="1">Part of the 50S ribosomal subunit. Forms a cluster with proteins L14 and L19.</text>
</comment>
<comment type="similarity">
    <text evidence="1">Belongs to the universal ribosomal protein uL3 family.</text>
</comment>
<proteinExistence type="inferred from homology"/>
<dbReference type="EMBL" id="AE017332">
    <property type="protein sequence ID" value="AAV27444.1"/>
    <property type="molecule type" value="Genomic_DNA"/>
</dbReference>
<dbReference type="RefSeq" id="WP_011206024.1">
    <property type="nucleotide sequence ID" value="NC_006360.1"/>
</dbReference>
<dbReference type="SMR" id="Q601L5"/>
<dbReference type="KEGG" id="mhy:mhp187"/>
<dbReference type="eggNOG" id="COG0087">
    <property type="taxonomic scope" value="Bacteria"/>
</dbReference>
<dbReference type="HOGENOM" id="CLU_044142_4_0_14"/>
<dbReference type="PhylomeDB" id="Q601L5"/>
<dbReference type="Proteomes" id="UP000006822">
    <property type="component" value="Chromosome"/>
</dbReference>
<dbReference type="GO" id="GO:0022625">
    <property type="term" value="C:cytosolic large ribosomal subunit"/>
    <property type="evidence" value="ECO:0007669"/>
    <property type="project" value="TreeGrafter"/>
</dbReference>
<dbReference type="GO" id="GO:0019843">
    <property type="term" value="F:rRNA binding"/>
    <property type="evidence" value="ECO:0007669"/>
    <property type="project" value="UniProtKB-UniRule"/>
</dbReference>
<dbReference type="GO" id="GO:0003735">
    <property type="term" value="F:structural constituent of ribosome"/>
    <property type="evidence" value="ECO:0007669"/>
    <property type="project" value="InterPro"/>
</dbReference>
<dbReference type="GO" id="GO:0006412">
    <property type="term" value="P:translation"/>
    <property type="evidence" value="ECO:0007669"/>
    <property type="project" value="UniProtKB-UniRule"/>
</dbReference>
<dbReference type="FunFam" id="2.40.30.10:FF:000004">
    <property type="entry name" value="50S ribosomal protein L3"/>
    <property type="match status" value="1"/>
</dbReference>
<dbReference type="Gene3D" id="3.30.160.810">
    <property type="match status" value="1"/>
</dbReference>
<dbReference type="Gene3D" id="2.40.30.10">
    <property type="entry name" value="Translation factors"/>
    <property type="match status" value="1"/>
</dbReference>
<dbReference type="HAMAP" id="MF_01325_B">
    <property type="entry name" value="Ribosomal_uL3_B"/>
    <property type="match status" value="1"/>
</dbReference>
<dbReference type="InterPro" id="IPR000597">
    <property type="entry name" value="Ribosomal_uL3"/>
</dbReference>
<dbReference type="InterPro" id="IPR019927">
    <property type="entry name" value="Ribosomal_uL3_bac/org-type"/>
</dbReference>
<dbReference type="InterPro" id="IPR019926">
    <property type="entry name" value="Ribosomal_uL3_CS"/>
</dbReference>
<dbReference type="InterPro" id="IPR009000">
    <property type="entry name" value="Transl_B-barrel_sf"/>
</dbReference>
<dbReference type="NCBIfam" id="TIGR03625">
    <property type="entry name" value="L3_bact"/>
    <property type="match status" value="1"/>
</dbReference>
<dbReference type="PANTHER" id="PTHR11229">
    <property type="entry name" value="50S RIBOSOMAL PROTEIN L3"/>
    <property type="match status" value="1"/>
</dbReference>
<dbReference type="PANTHER" id="PTHR11229:SF16">
    <property type="entry name" value="LARGE RIBOSOMAL SUBUNIT PROTEIN UL3C"/>
    <property type="match status" value="1"/>
</dbReference>
<dbReference type="Pfam" id="PF00297">
    <property type="entry name" value="Ribosomal_L3"/>
    <property type="match status" value="1"/>
</dbReference>
<dbReference type="SUPFAM" id="SSF50447">
    <property type="entry name" value="Translation proteins"/>
    <property type="match status" value="1"/>
</dbReference>
<dbReference type="PROSITE" id="PS00474">
    <property type="entry name" value="RIBOSOMAL_L3"/>
    <property type="match status" value="1"/>
</dbReference>
<reference key="1">
    <citation type="journal article" date="2004" name="J. Bacteriol.">
        <title>The genome sequence of Mycoplasma hyopneumoniae strain 232, the agent of swine mycoplasmosis.</title>
        <authorList>
            <person name="Minion F.C."/>
            <person name="Lefkowitz E.J."/>
            <person name="Madsen M.L."/>
            <person name="Cleary B.J."/>
            <person name="Swartzell S.M."/>
            <person name="Mahairas G.G."/>
        </authorList>
    </citation>
    <scope>NUCLEOTIDE SEQUENCE [LARGE SCALE GENOMIC DNA]</scope>
    <source>
        <strain>232</strain>
    </source>
</reference>
<gene>
    <name evidence="1" type="primary">rplC</name>
    <name type="ordered locus">mhp187</name>
</gene>
<name>RL3_MESH2</name>
<keyword id="KW-0687">Ribonucleoprotein</keyword>
<keyword id="KW-0689">Ribosomal protein</keyword>
<keyword id="KW-0694">RNA-binding</keyword>
<keyword id="KW-0699">rRNA-binding</keyword>
<evidence type="ECO:0000255" key="1">
    <source>
        <dbReference type="HAMAP-Rule" id="MF_01325"/>
    </source>
</evidence>
<evidence type="ECO:0000256" key="2">
    <source>
        <dbReference type="SAM" id="MobiDB-lite"/>
    </source>
</evidence>
<evidence type="ECO:0000305" key="3"/>
<feature type="chain" id="PRO_0000241368" description="Large ribosomal subunit protein uL3">
    <location>
        <begin position="1"/>
        <end position="230"/>
    </location>
</feature>
<feature type="region of interest" description="Disordered" evidence="2">
    <location>
        <begin position="125"/>
        <end position="149"/>
    </location>
</feature>
<feature type="region of interest" description="Disordered" evidence="2">
    <location>
        <begin position="210"/>
        <end position="230"/>
    </location>
</feature>
<sequence>MKGILGKKVGMSQLFTTEGIAISVSIIEVPENIVTKIITKEKNSYNAIQLAAFDKKQSRFLKPEIGHFAKANTKPKRFIKEFRDFQGYKLGQTVDVSIFSPGEFVDVTGTSKGKGFAGTIKRYNQAIGPRSHGGGGGSKPIRQTGSLGDISGNKVVKGMTMPGRLGHEKVTKQSLEIIKVDKENNLLVLKGSVPGPKKSFLVIKSAIKKPNPKNPVSLFVPNSDKEVKNE</sequence>
<accession>Q601L5</accession>